<sequence>MFEELRPHLIELRKRLFISVACIVVMFIVCFALRSYILDILKAPLIAVLPEVAKHVNVIEVQEALFTAMKVSFFAAFIFSLPVIFWQFWKFVAPGLYDNEKRLVVPFVSFASIMFAFGACFCYFVVVPLAFKFLINFGLNEDFNPVITIGTYVDFFTKVVVAFGLAFEMPVIAFFFAKIGLIDDSFLKRHFRIAVLVIFVFSAFMTPPDVLSQFLMAGPLCGLYGLSILIVQKVNPAPKDKESDE</sequence>
<protein>
    <recommendedName>
        <fullName evidence="1">Sec-independent protein translocase protein TatC</fullName>
    </recommendedName>
</protein>
<gene>
    <name evidence="1" type="primary">tatC</name>
    <name type="synonym">mttB</name>
    <name type="ordered locus">Cj0578c</name>
</gene>
<reference key="1">
    <citation type="journal article" date="2000" name="Nature">
        <title>The genome sequence of the food-borne pathogen Campylobacter jejuni reveals hypervariable sequences.</title>
        <authorList>
            <person name="Parkhill J."/>
            <person name="Wren B.W."/>
            <person name="Mungall K.L."/>
            <person name="Ketley J.M."/>
            <person name="Churcher C.M."/>
            <person name="Basham D."/>
            <person name="Chillingworth T."/>
            <person name="Davies R.M."/>
            <person name="Feltwell T."/>
            <person name="Holroyd S."/>
            <person name="Jagels K."/>
            <person name="Karlyshev A.V."/>
            <person name="Moule S."/>
            <person name="Pallen M.J."/>
            <person name="Penn C.W."/>
            <person name="Quail M.A."/>
            <person name="Rajandream M.A."/>
            <person name="Rutherford K.M."/>
            <person name="van Vliet A.H.M."/>
            <person name="Whitehead S."/>
            <person name="Barrell B.G."/>
        </authorList>
    </citation>
    <scope>NUCLEOTIDE SEQUENCE [LARGE SCALE GENOMIC DNA]</scope>
    <source>
        <strain>ATCC 700819 / NCTC 11168</strain>
    </source>
</reference>
<feature type="chain" id="PRO_0000098082" description="Sec-independent protein translocase protein TatC">
    <location>
        <begin position="1"/>
        <end position="245"/>
    </location>
</feature>
<feature type="transmembrane region" description="Helical" evidence="1">
    <location>
        <begin position="17"/>
        <end position="37"/>
    </location>
</feature>
<feature type="transmembrane region" description="Helical" evidence="1">
    <location>
        <begin position="73"/>
        <end position="93"/>
    </location>
</feature>
<feature type="transmembrane region" description="Helical" evidence="1">
    <location>
        <begin position="107"/>
        <end position="127"/>
    </location>
</feature>
<feature type="transmembrane region" description="Helical" evidence="1">
    <location>
        <begin position="159"/>
        <end position="179"/>
    </location>
</feature>
<feature type="transmembrane region" description="Helical" evidence="1">
    <location>
        <begin position="191"/>
        <end position="207"/>
    </location>
</feature>
<feature type="transmembrane region" description="Helical" evidence="1">
    <location>
        <begin position="210"/>
        <end position="230"/>
    </location>
</feature>
<organism>
    <name type="scientific">Campylobacter jejuni subsp. jejuni serotype O:2 (strain ATCC 700819 / NCTC 11168)</name>
    <dbReference type="NCBI Taxonomy" id="192222"/>
    <lineage>
        <taxon>Bacteria</taxon>
        <taxon>Pseudomonadati</taxon>
        <taxon>Campylobacterota</taxon>
        <taxon>Epsilonproteobacteria</taxon>
        <taxon>Campylobacterales</taxon>
        <taxon>Campylobacteraceae</taxon>
        <taxon>Campylobacter</taxon>
    </lineage>
</organism>
<comment type="function">
    <text evidence="1">Part of the twin-arginine translocation (Tat) system that transports large folded proteins containing a characteristic twin-arginine motif in their signal peptide across membranes. Together with TatB, TatC is part of a receptor directly interacting with Tat signal peptides.</text>
</comment>
<comment type="subunit">
    <text evidence="1">The Tat system comprises two distinct complexes: a TatABC complex, containing multiple copies of TatA, TatB and TatC subunits, and a separate TatA complex, containing only TatA subunits. Substrates initially bind to the TatABC complex, which probably triggers association of the separate TatA complex to form the active translocon.</text>
</comment>
<comment type="subcellular location">
    <subcellularLocation>
        <location evidence="1">Cell inner membrane</location>
        <topology evidence="1">Multi-pass membrane protein</topology>
    </subcellularLocation>
</comment>
<comment type="similarity">
    <text evidence="1">Belongs to the TatC family.</text>
</comment>
<accession>Q9PHT8</accession>
<accession>Q0PAT9</accession>
<dbReference type="EMBL" id="AL111168">
    <property type="protein sequence ID" value="CAL34724.1"/>
    <property type="molecule type" value="Genomic_DNA"/>
</dbReference>
<dbReference type="PIR" id="A81405">
    <property type="entry name" value="A81405"/>
</dbReference>
<dbReference type="RefSeq" id="WP_002852171.1">
    <property type="nucleotide sequence ID" value="NZ_SZUC01000002.1"/>
</dbReference>
<dbReference type="RefSeq" id="YP_002344008.1">
    <property type="nucleotide sequence ID" value="NC_002163.1"/>
</dbReference>
<dbReference type="SMR" id="Q9PHT8"/>
<dbReference type="IntAct" id="Q9PHT8">
    <property type="interactions" value="2"/>
</dbReference>
<dbReference type="STRING" id="192222.Cj0578c"/>
<dbReference type="PaxDb" id="192222-Cj0578c"/>
<dbReference type="EnsemblBacteria" id="CAL34724">
    <property type="protein sequence ID" value="CAL34724"/>
    <property type="gene ID" value="Cj0578c"/>
</dbReference>
<dbReference type="GeneID" id="904903"/>
<dbReference type="KEGG" id="cje:Cj0578c"/>
<dbReference type="PATRIC" id="fig|192222.6.peg.570"/>
<dbReference type="eggNOG" id="COG0805">
    <property type="taxonomic scope" value="Bacteria"/>
</dbReference>
<dbReference type="HOGENOM" id="CLU_031942_1_0_7"/>
<dbReference type="OrthoDB" id="9777044at2"/>
<dbReference type="Proteomes" id="UP000000799">
    <property type="component" value="Chromosome"/>
</dbReference>
<dbReference type="GO" id="GO:0033281">
    <property type="term" value="C:TAT protein transport complex"/>
    <property type="evidence" value="ECO:0007669"/>
    <property type="project" value="UniProtKB-UniRule"/>
</dbReference>
<dbReference type="GO" id="GO:0009977">
    <property type="term" value="F:proton motive force dependent protein transmembrane transporter activity"/>
    <property type="evidence" value="ECO:0007669"/>
    <property type="project" value="TreeGrafter"/>
</dbReference>
<dbReference type="GO" id="GO:0065002">
    <property type="term" value="P:intracellular protein transmembrane transport"/>
    <property type="evidence" value="ECO:0007669"/>
    <property type="project" value="TreeGrafter"/>
</dbReference>
<dbReference type="GO" id="GO:0043953">
    <property type="term" value="P:protein transport by the Tat complex"/>
    <property type="evidence" value="ECO:0007669"/>
    <property type="project" value="UniProtKB-UniRule"/>
</dbReference>
<dbReference type="HAMAP" id="MF_00902">
    <property type="entry name" value="TatC"/>
    <property type="match status" value="1"/>
</dbReference>
<dbReference type="InterPro" id="IPR019820">
    <property type="entry name" value="Sec-indep_translocase_CS"/>
</dbReference>
<dbReference type="InterPro" id="IPR002033">
    <property type="entry name" value="TatC"/>
</dbReference>
<dbReference type="NCBIfam" id="TIGR00945">
    <property type="entry name" value="tatC"/>
    <property type="match status" value="1"/>
</dbReference>
<dbReference type="PANTHER" id="PTHR30371">
    <property type="entry name" value="SEC-INDEPENDENT PROTEIN TRANSLOCASE PROTEIN TATC"/>
    <property type="match status" value="1"/>
</dbReference>
<dbReference type="PANTHER" id="PTHR30371:SF0">
    <property type="entry name" value="SEC-INDEPENDENT PROTEIN TRANSLOCASE PROTEIN TATC, CHLOROPLASTIC-RELATED"/>
    <property type="match status" value="1"/>
</dbReference>
<dbReference type="Pfam" id="PF00902">
    <property type="entry name" value="TatC"/>
    <property type="match status" value="1"/>
</dbReference>
<dbReference type="PRINTS" id="PR01840">
    <property type="entry name" value="TATCFAMILY"/>
</dbReference>
<dbReference type="PROSITE" id="PS01218">
    <property type="entry name" value="TATC"/>
    <property type="match status" value="1"/>
</dbReference>
<keyword id="KW-0997">Cell inner membrane</keyword>
<keyword id="KW-1003">Cell membrane</keyword>
<keyword id="KW-0472">Membrane</keyword>
<keyword id="KW-0653">Protein transport</keyword>
<keyword id="KW-1185">Reference proteome</keyword>
<keyword id="KW-0811">Translocation</keyword>
<keyword id="KW-0812">Transmembrane</keyword>
<keyword id="KW-1133">Transmembrane helix</keyword>
<keyword id="KW-0813">Transport</keyword>
<name>TATC_CAMJE</name>
<proteinExistence type="inferred from homology"/>
<evidence type="ECO:0000255" key="1">
    <source>
        <dbReference type="HAMAP-Rule" id="MF_00902"/>
    </source>
</evidence>